<comment type="function">
    <text evidence="1">Negative regulator of replication initiation, which contributes to regulation of DNA replication and ensures that replication initiation occurs exactly once per chromosome per cell cycle. Binds to pairs of hemimethylated GATC sequences in the oriC region, thus preventing assembly of replication proteins and re-initiation at newly replicated origins. Repression is relieved when the region becomes fully methylated.</text>
</comment>
<comment type="subunit">
    <text evidence="1">Homodimer. Polymerizes to form helical filaments.</text>
</comment>
<comment type="subcellular location">
    <subcellularLocation>
        <location evidence="1">Cytoplasm</location>
    </subcellularLocation>
</comment>
<comment type="similarity">
    <text evidence="1">Belongs to the SeqA family.</text>
</comment>
<comment type="sequence caution" evidence="2">
    <conflict type="erroneous initiation">
        <sequence resource="EMBL-CDS" id="ABP59883"/>
    </conflict>
    <text>Extended N-terminus.</text>
</comment>
<keyword id="KW-0963">Cytoplasm</keyword>
<keyword id="KW-0236">DNA replication inhibitor</keyword>
<keyword id="KW-0238">DNA-binding</keyword>
<organism>
    <name type="scientific">Enterobacter sp. (strain 638)</name>
    <dbReference type="NCBI Taxonomy" id="399742"/>
    <lineage>
        <taxon>Bacteria</taxon>
        <taxon>Pseudomonadati</taxon>
        <taxon>Pseudomonadota</taxon>
        <taxon>Gammaproteobacteria</taxon>
        <taxon>Enterobacterales</taxon>
        <taxon>Enterobacteriaceae</taxon>
        <taxon>Enterobacter</taxon>
    </lineage>
</organism>
<protein>
    <recommendedName>
        <fullName evidence="1">Negative modulator of initiation of replication</fullName>
    </recommendedName>
</protein>
<name>SEQA_ENT38</name>
<accession>A4W853</accession>
<proteinExistence type="inferred from homology"/>
<feature type="chain" id="PRO_0000413920" description="Negative modulator of initiation of replication">
    <location>
        <begin position="1"/>
        <end position="180"/>
    </location>
</feature>
<feature type="region of interest" description="Interaction with DNA" evidence="1">
    <location>
        <begin position="86"/>
        <end position="87"/>
    </location>
</feature>
<feature type="region of interest" description="Interaction with DNA" evidence="1">
    <location>
        <begin position="115"/>
        <end position="119"/>
    </location>
</feature>
<feature type="region of interest" description="Interaction with DNA" evidence="1">
    <location>
        <begin position="149"/>
        <end position="155"/>
    </location>
</feature>
<reference key="1">
    <citation type="journal article" date="2010" name="PLoS Genet.">
        <title>Genome sequence of the plant growth promoting endophytic bacterium Enterobacter sp. 638.</title>
        <authorList>
            <person name="Taghavi S."/>
            <person name="van der Lelie D."/>
            <person name="Hoffman A."/>
            <person name="Zhang Y.B."/>
            <person name="Walla M.D."/>
            <person name="Vangronsveld J."/>
            <person name="Newman L."/>
            <person name="Monchy S."/>
        </authorList>
    </citation>
    <scope>NUCLEOTIDE SEQUENCE [LARGE SCALE GENOMIC DNA]</scope>
    <source>
        <strain>638</strain>
    </source>
</reference>
<gene>
    <name evidence="1" type="primary">seqA</name>
    <name type="ordered locus">Ent638_1202</name>
</gene>
<sequence>MKTIEVDDELYAYIASHTRHIGESASDILRRMLKFSAASQPATPVSKEVRASNVVAEAKTVAPVKDKVRAVRELLLSDEYAEQKKAVNRFLLVLTTLYSLDNKAFAEATESLHGRTRVYFAADEQTLIQNGNQTKPKQVPGTPYWVITNTNTGRKRSMVEHIMQSMQFPAELIEKVCGTI</sequence>
<evidence type="ECO:0000255" key="1">
    <source>
        <dbReference type="HAMAP-Rule" id="MF_00908"/>
    </source>
</evidence>
<evidence type="ECO:0000305" key="2"/>
<dbReference type="EMBL" id="CP000653">
    <property type="protein sequence ID" value="ABP59883.1"/>
    <property type="status" value="ALT_INIT"/>
    <property type="molecule type" value="Genomic_DNA"/>
</dbReference>
<dbReference type="RefSeq" id="WP_041689343.1">
    <property type="nucleotide sequence ID" value="NC_009436.1"/>
</dbReference>
<dbReference type="SMR" id="A4W853"/>
<dbReference type="STRING" id="399742.Ent638_1202"/>
<dbReference type="KEGG" id="ent:Ent638_1202"/>
<dbReference type="eggNOG" id="COG3057">
    <property type="taxonomic scope" value="Bacteria"/>
</dbReference>
<dbReference type="HOGENOM" id="CLU_099733_0_0_6"/>
<dbReference type="OrthoDB" id="5591069at2"/>
<dbReference type="Proteomes" id="UP000000230">
    <property type="component" value="Chromosome"/>
</dbReference>
<dbReference type="GO" id="GO:0005737">
    <property type="term" value="C:cytoplasm"/>
    <property type="evidence" value="ECO:0007669"/>
    <property type="project" value="UniProtKB-SubCell"/>
</dbReference>
<dbReference type="GO" id="GO:0043565">
    <property type="term" value="F:sequence-specific DNA binding"/>
    <property type="evidence" value="ECO:0007669"/>
    <property type="project" value="UniProtKB-ARBA"/>
</dbReference>
<dbReference type="GO" id="GO:0032297">
    <property type="term" value="P:negative regulation of DNA-templated DNA replication initiation"/>
    <property type="evidence" value="ECO:0007669"/>
    <property type="project" value="UniProtKB-UniRule"/>
</dbReference>
<dbReference type="GO" id="GO:0006355">
    <property type="term" value="P:regulation of DNA-templated transcription"/>
    <property type="evidence" value="ECO:0007669"/>
    <property type="project" value="InterPro"/>
</dbReference>
<dbReference type="FunFam" id="1.10.1220.10:FF:000002">
    <property type="entry name" value="Negative modulator of initiation of replication"/>
    <property type="match status" value="1"/>
</dbReference>
<dbReference type="FunFam" id="1.20.1380.10:FF:000001">
    <property type="entry name" value="Negative modulator of initiation of replication"/>
    <property type="match status" value="1"/>
</dbReference>
<dbReference type="Gene3D" id="1.10.1220.10">
    <property type="entry name" value="Met repressor-like"/>
    <property type="match status" value="1"/>
</dbReference>
<dbReference type="Gene3D" id="1.20.1380.10">
    <property type="entry name" value="Replication modulator SeqA, C-terminal DNA-binding domain"/>
    <property type="match status" value="1"/>
</dbReference>
<dbReference type="HAMAP" id="MF_00908">
    <property type="entry name" value="SeqA"/>
    <property type="match status" value="1"/>
</dbReference>
<dbReference type="InterPro" id="IPR013321">
    <property type="entry name" value="Arc_rbn_hlx_hlx"/>
</dbReference>
<dbReference type="InterPro" id="IPR010985">
    <property type="entry name" value="Ribbon_hlx_hlx"/>
</dbReference>
<dbReference type="InterPro" id="IPR005621">
    <property type="entry name" value="SeqA"/>
</dbReference>
<dbReference type="InterPro" id="IPR026577">
    <property type="entry name" value="SeqA_DNA-bd_C"/>
</dbReference>
<dbReference type="InterPro" id="IPR036835">
    <property type="entry name" value="SeqA_DNA-bd_C_sf"/>
</dbReference>
<dbReference type="InterPro" id="IPR033761">
    <property type="entry name" value="SeqA_N"/>
</dbReference>
<dbReference type="NCBIfam" id="NF008389">
    <property type="entry name" value="PRK11187.1"/>
    <property type="match status" value="1"/>
</dbReference>
<dbReference type="Pfam" id="PF03925">
    <property type="entry name" value="SeqA"/>
    <property type="match status" value="1"/>
</dbReference>
<dbReference type="Pfam" id="PF17206">
    <property type="entry name" value="SeqA_N"/>
    <property type="match status" value="1"/>
</dbReference>
<dbReference type="PIRSF" id="PIRSF019401">
    <property type="entry name" value="SeqA"/>
    <property type="match status" value="1"/>
</dbReference>
<dbReference type="SUPFAM" id="SSF82808">
    <property type="entry name" value="Replication modulator SeqA, C-terminal DNA-binding domain"/>
    <property type="match status" value="1"/>
</dbReference>
<dbReference type="SUPFAM" id="SSF47598">
    <property type="entry name" value="Ribbon-helix-helix"/>
    <property type="match status" value="1"/>
</dbReference>